<accession>Q6DHL4</accession>
<comment type="function">
    <text evidence="1">Ubiquitin-like protein that can be covalently attached to proteins as a monomer or as a lysine-linked polymer. Covalent attachment via an isopeptide bond to its substrates requires prior activation by the E1 complex sae1-sae2 and linkage to the E2 enzyme ube2i, and can be promoted by an E3 ligase such as pias1-4. This post-translational modification on lysine residues of proteins plays a crucial role in a number of cellular processes such as nuclear transport, DNA replication and repair, mitosis and signal transduction. Polymeric sumo2 chains are also susceptible to polyubiquitination which functions as a signal for proteasomal degradation of modified proteins (By similarity).</text>
</comment>
<comment type="subunit">
    <text evidence="1">Interacts with sae2 and ube2i. Covalently attached to a number of proteins (By similarity).</text>
</comment>
<comment type="subcellular location">
    <subcellularLocation>
        <location evidence="1">Nucleus</location>
    </subcellularLocation>
</comment>
<comment type="PTM">
    <text evidence="1">Polymeric chains can be formed through Lys-11 cross-linking.</text>
</comment>
<comment type="PTM">
    <text evidence="1">Cleavage of precursor form by a sentrin-specific protease is necessary for function.</text>
</comment>
<comment type="similarity">
    <text evidence="3">Belongs to the ubiquitin family. SUMO subfamily.</text>
</comment>
<protein>
    <recommendedName>
        <fullName evidence="3">Small ubiquitin-related modifier 2</fullName>
        <shortName evidence="3">SUMO-2</shortName>
    </recommendedName>
</protein>
<evidence type="ECO:0000250" key="1"/>
<evidence type="ECO:0000255" key="2">
    <source>
        <dbReference type="PROSITE-ProRule" id="PRU00214"/>
    </source>
</evidence>
<evidence type="ECO:0000305" key="3"/>
<evidence type="ECO:0000312" key="4">
    <source>
        <dbReference type="EMBL" id="AAH75956.1"/>
    </source>
</evidence>
<sequence>MADEKPKEGVKTENNDHINLKVAGQDGSVVQFKIKRHTPLSKLMKAYCERQGLTMRQIRFRFDGQPINETDTPAQLEMEDEDTIDVFQQQTGGHRI</sequence>
<organism>
    <name type="scientific">Danio rerio</name>
    <name type="common">Zebrafish</name>
    <name type="synonym">Brachydanio rerio</name>
    <dbReference type="NCBI Taxonomy" id="7955"/>
    <lineage>
        <taxon>Eukaryota</taxon>
        <taxon>Metazoa</taxon>
        <taxon>Chordata</taxon>
        <taxon>Craniata</taxon>
        <taxon>Vertebrata</taxon>
        <taxon>Euteleostomi</taxon>
        <taxon>Actinopterygii</taxon>
        <taxon>Neopterygii</taxon>
        <taxon>Teleostei</taxon>
        <taxon>Ostariophysi</taxon>
        <taxon>Cypriniformes</taxon>
        <taxon>Danionidae</taxon>
        <taxon>Danioninae</taxon>
        <taxon>Danio</taxon>
    </lineage>
</organism>
<keyword id="KW-1017">Isopeptide bond</keyword>
<keyword id="KW-0539">Nucleus</keyword>
<keyword id="KW-1185">Reference proteome</keyword>
<keyword id="KW-0832">Ubl conjugation</keyword>
<keyword id="KW-0833">Ubl conjugation pathway</keyword>
<gene>
    <name evidence="3" type="primary">sumo2</name>
    <name evidence="4" type="ORF">zgc:92241</name>
</gene>
<name>SUMO2_DANRE</name>
<feature type="chain" id="PRO_0000269469" description="Small ubiquitin-related modifier 2">
    <location>
        <begin position="1"/>
        <end position="93"/>
    </location>
</feature>
<feature type="propeptide" id="PRO_0000269470" evidence="1">
    <location>
        <begin position="94"/>
        <end position="96"/>
    </location>
</feature>
<feature type="domain" description="Ubiquitin-like" evidence="2">
    <location>
        <begin position="16"/>
        <end position="96"/>
    </location>
</feature>
<feature type="cross-link" description="Glycyl lysine isopeptide (Lys-Gly) (interchain with G-Cter in SUMO)" evidence="1">
    <location>
        <position position="11"/>
    </location>
</feature>
<feature type="cross-link" description="Glycyl lysine isopeptide (Gly-Lys) (interchain with K-? in acceptor proteins)" evidence="2">
    <location>
        <position position="93"/>
    </location>
</feature>
<proteinExistence type="inferred from homology"/>
<dbReference type="EMBL" id="BC075956">
    <property type="protein sequence ID" value="AAH75956.1"/>
    <property type="molecule type" value="mRNA"/>
</dbReference>
<dbReference type="RefSeq" id="NP_001003422.1">
    <property type="nucleotide sequence ID" value="NM_001003422.2"/>
</dbReference>
<dbReference type="SMR" id="Q6DHL4"/>
<dbReference type="FunCoup" id="Q6DHL4">
    <property type="interactions" value="2830"/>
</dbReference>
<dbReference type="STRING" id="7955.ENSDARP00000137571"/>
<dbReference type="PaxDb" id="7955-ENSDARP00000066628"/>
<dbReference type="PeptideAtlas" id="Q6DHL4"/>
<dbReference type="Ensembl" id="ENSDART00000157771">
    <property type="protein sequence ID" value="ENSDARP00000137571"/>
    <property type="gene ID" value="ENSDARG00000102741"/>
</dbReference>
<dbReference type="Ensembl" id="ENSDART00000166758">
    <property type="protein sequence ID" value="ENSDARP00000131145"/>
    <property type="gene ID" value="ENSDARG00000102741"/>
</dbReference>
<dbReference type="GeneID" id="445027"/>
<dbReference type="KEGG" id="dre:445027"/>
<dbReference type="AGR" id="ZFIN:ZDB-GENE-040801-7"/>
<dbReference type="CTD" id="445027"/>
<dbReference type="ZFIN" id="ZDB-GENE-040801-7">
    <property type="gene designation" value="sumo2b"/>
</dbReference>
<dbReference type="eggNOG" id="KOG1769">
    <property type="taxonomic scope" value="Eukaryota"/>
</dbReference>
<dbReference type="HOGENOM" id="CLU_148322_2_1_1"/>
<dbReference type="InParanoid" id="Q6DHL4"/>
<dbReference type="OMA" id="MKIYCAR"/>
<dbReference type="OrthoDB" id="442921at2759"/>
<dbReference type="PhylomeDB" id="Q6DHL4"/>
<dbReference type="Reactome" id="R-DRE-196791">
    <property type="pathway name" value="Vitamin D (calciferol) metabolism"/>
</dbReference>
<dbReference type="Reactome" id="R-DRE-3108214">
    <property type="pathway name" value="SUMOylation of DNA damage response and repair proteins"/>
</dbReference>
<dbReference type="Reactome" id="R-DRE-3899300">
    <property type="pathway name" value="SUMOylation of transcription cofactors"/>
</dbReference>
<dbReference type="Reactome" id="R-DRE-4090294">
    <property type="pathway name" value="SUMOylation of intracellular receptors"/>
</dbReference>
<dbReference type="Reactome" id="R-DRE-4570464">
    <property type="pathway name" value="SUMOylation of RNA binding proteins"/>
</dbReference>
<dbReference type="PRO" id="PR:Q6DHL4"/>
<dbReference type="Proteomes" id="UP000000437">
    <property type="component" value="Chromosome 3"/>
</dbReference>
<dbReference type="Bgee" id="ENSDARG00000102741">
    <property type="expression patterns" value="Expressed in pharyngeal gill and 31 other cell types or tissues"/>
</dbReference>
<dbReference type="GO" id="GO:0005634">
    <property type="term" value="C:nucleus"/>
    <property type="evidence" value="ECO:0000318"/>
    <property type="project" value="GO_Central"/>
</dbReference>
<dbReference type="GO" id="GO:0031386">
    <property type="term" value="F:protein tag activity"/>
    <property type="evidence" value="ECO:0000318"/>
    <property type="project" value="GO_Central"/>
</dbReference>
<dbReference type="GO" id="GO:0044389">
    <property type="term" value="F:ubiquitin-like protein ligase binding"/>
    <property type="evidence" value="ECO:0000318"/>
    <property type="project" value="GO_Central"/>
</dbReference>
<dbReference type="GO" id="GO:0043009">
    <property type="term" value="P:chordate embryonic development"/>
    <property type="evidence" value="ECO:0000316"/>
    <property type="project" value="ZFIN"/>
</dbReference>
<dbReference type="GO" id="GO:0060216">
    <property type="term" value="P:definitive hemopoiesis"/>
    <property type="evidence" value="ECO:0000316"/>
    <property type="project" value="ZFIN"/>
</dbReference>
<dbReference type="GO" id="GO:0016925">
    <property type="term" value="P:protein sumoylation"/>
    <property type="evidence" value="ECO:0000318"/>
    <property type="project" value="GO_Central"/>
</dbReference>
<dbReference type="CDD" id="cd16115">
    <property type="entry name" value="Ubl_SUMO2_3_4"/>
    <property type="match status" value="1"/>
</dbReference>
<dbReference type="FunFam" id="3.10.20.90:FF:000482">
    <property type="entry name" value="Small ubiquitin-related modifier 2"/>
    <property type="match status" value="1"/>
</dbReference>
<dbReference type="Gene3D" id="3.10.20.90">
    <property type="entry name" value="Phosphatidylinositol 3-kinase Catalytic Subunit, Chain A, domain 1"/>
    <property type="match status" value="1"/>
</dbReference>
<dbReference type="InterPro" id="IPR022617">
    <property type="entry name" value="Rad60/SUMO-like_dom"/>
</dbReference>
<dbReference type="InterPro" id="IPR000626">
    <property type="entry name" value="Ubiquitin-like_dom"/>
</dbReference>
<dbReference type="InterPro" id="IPR029071">
    <property type="entry name" value="Ubiquitin-like_domsf"/>
</dbReference>
<dbReference type="PANTHER" id="PTHR10562">
    <property type="entry name" value="SMALL UBIQUITIN-RELATED MODIFIER"/>
    <property type="match status" value="1"/>
</dbReference>
<dbReference type="Pfam" id="PF11976">
    <property type="entry name" value="Rad60-SLD"/>
    <property type="match status" value="1"/>
</dbReference>
<dbReference type="SMART" id="SM00213">
    <property type="entry name" value="UBQ"/>
    <property type="match status" value="1"/>
</dbReference>
<dbReference type="SUPFAM" id="SSF54236">
    <property type="entry name" value="Ubiquitin-like"/>
    <property type="match status" value="1"/>
</dbReference>
<dbReference type="PROSITE" id="PS50053">
    <property type="entry name" value="UBIQUITIN_2"/>
    <property type="match status" value="1"/>
</dbReference>
<reference key="1">
    <citation type="submission" date="2004-07" db="EMBL/GenBank/DDBJ databases">
        <authorList>
            <consortium name="NIH - Zebrafish Gene Collection (ZGC) project"/>
        </authorList>
    </citation>
    <scope>NUCLEOTIDE SEQUENCE [LARGE SCALE MRNA]</scope>
</reference>